<name>RS17_STRPM</name>
<protein>
    <recommendedName>
        <fullName evidence="1">Small ribosomal subunit protein uS17</fullName>
    </recommendedName>
    <alternativeName>
        <fullName evidence="2">30S ribosomal protein S17</fullName>
    </alternativeName>
</protein>
<proteinExistence type="inferred from homology"/>
<sequence length="86" mass="10090">MERNQRKTLYGRVVSDKMDKTITVVVETKRNHPVYGKRINYSKKYKAHDENNVAKEGDIVRIMETRPLSATKRFRLVEVVEKAVII</sequence>
<organism>
    <name type="scientific">Streptococcus pyogenes serotype M28 (strain MGAS6180)</name>
    <dbReference type="NCBI Taxonomy" id="319701"/>
    <lineage>
        <taxon>Bacteria</taxon>
        <taxon>Bacillati</taxon>
        <taxon>Bacillota</taxon>
        <taxon>Bacilli</taxon>
        <taxon>Lactobacillales</taxon>
        <taxon>Streptococcaceae</taxon>
        <taxon>Streptococcus</taxon>
    </lineage>
</organism>
<comment type="function">
    <text evidence="1">One of the primary rRNA binding proteins, it binds specifically to the 5'-end of 16S ribosomal RNA.</text>
</comment>
<comment type="subunit">
    <text evidence="1">Part of the 30S ribosomal subunit.</text>
</comment>
<comment type="similarity">
    <text evidence="1">Belongs to the universal ribosomal protein uS17 family.</text>
</comment>
<reference key="1">
    <citation type="journal article" date="2005" name="J. Infect. Dis.">
        <title>Genome sequence of a serotype M28 strain of group A Streptococcus: potential new insights into puerperal sepsis and bacterial disease specificity.</title>
        <authorList>
            <person name="Green N.M."/>
            <person name="Zhang S."/>
            <person name="Porcella S.F."/>
            <person name="Nagiec M.J."/>
            <person name="Barbian K.D."/>
            <person name="Beres S.B."/>
            <person name="Lefebvre R.B."/>
            <person name="Musser J.M."/>
        </authorList>
    </citation>
    <scope>NUCLEOTIDE SEQUENCE [LARGE SCALE GENOMIC DNA]</scope>
    <source>
        <strain>MGAS6180</strain>
    </source>
</reference>
<gene>
    <name evidence="1" type="primary">rpsQ</name>
    <name type="ordered locus">M28_Spy0052</name>
</gene>
<dbReference type="EMBL" id="CP000056">
    <property type="protein sequence ID" value="AAX71166.1"/>
    <property type="molecule type" value="Genomic_DNA"/>
</dbReference>
<dbReference type="RefSeq" id="WP_000440811.1">
    <property type="nucleotide sequence ID" value="NC_007296.2"/>
</dbReference>
<dbReference type="SMR" id="Q48VU0"/>
<dbReference type="GeneID" id="69900035"/>
<dbReference type="KEGG" id="spb:M28_Spy0052"/>
<dbReference type="HOGENOM" id="CLU_073626_1_0_9"/>
<dbReference type="GO" id="GO:0022627">
    <property type="term" value="C:cytosolic small ribosomal subunit"/>
    <property type="evidence" value="ECO:0007669"/>
    <property type="project" value="TreeGrafter"/>
</dbReference>
<dbReference type="GO" id="GO:0019843">
    <property type="term" value="F:rRNA binding"/>
    <property type="evidence" value="ECO:0007669"/>
    <property type="project" value="UniProtKB-UniRule"/>
</dbReference>
<dbReference type="GO" id="GO:0003735">
    <property type="term" value="F:structural constituent of ribosome"/>
    <property type="evidence" value="ECO:0007669"/>
    <property type="project" value="InterPro"/>
</dbReference>
<dbReference type="GO" id="GO:0006412">
    <property type="term" value="P:translation"/>
    <property type="evidence" value="ECO:0007669"/>
    <property type="project" value="UniProtKB-UniRule"/>
</dbReference>
<dbReference type="CDD" id="cd00364">
    <property type="entry name" value="Ribosomal_uS17"/>
    <property type="match status" value="1"/>
</dbReference>
<dbReference type="FunFam" id="2.40.50.140:FF:000026">
    <property type="entry name" value="30S ribosomal protein S17"/>
    <property type="match status" value="1"/>
</dbReference>
<dbReference type="Gene3D" id="2.40.50.140">
    <property type="entry name" value="Nucleic acid-binding proteins"/>
    <property type="match status" value="1"/>
</dbReference>
<dbReference type="HAMAP" id="MF_01345_B">
    <property type="entry name" value="Ribosomal_uS17_B"/>
    <property type="match status" value="1"/>
</dbReference>
<dbReference type="InterPro" id="IPR012340">
    <property type="entry name" value="NA-bd_OB-fold"/>
</dbReference>
<dbReference type="InterPro" id="IPR000266">
    <property type="entry name" value="Ribosomal_uS17"/>
</dbReference>
<dbReference type="InterPro" id="IPR019984">
    <property type="entry name" value="Ribosomal_uS17_bact/chlr"/>
</dbReference>
<dbReference type="InterPro" id="IPR019979">
    <property type="entry name" value="Ribosomal_uS17_CS"/>
</dbReference>
<dbReference type="NCBIfam" id="NF004123">
    <property type="entry name" value="PRK05610.1"/>
    <property type="match status" value="1"/>
</dbReference>
<dbReference type="NCBIfam" id="TIGR03635">
    <property type="entry name" value="uS17_bact"/>
    <property type="match status" value="1"/>
</dbReference>
<dbReference type="PANTHER" id="PTHR10744">
    <property type="entry name" value="40S RIBOSOMAL PROTEIN S11 FAMILY MEMBER"/>
    <property type="match status" value="1"/>
</dbReference>
<dbReference type="PANTHER" id="PTHR10744:SF1">
    <property type="entry name" value="SMALL RIBOSOMAL SUBUNIT PROTEIN US17M"/>
    <property type="match status" value="1"/>
</dbReference>
<dbReference type="Pfam" id="PF00366">
    <property type="entry name" value="Ribosomal_S17"/>
    <property type="match status" value="1"/>
</dbReference>
<dbReference type="PRINTS" id="PR00973">
    <property type="entry name" value="RIBOSOMALS17"/>
</dbReference>
<dbReference type="SUPFAM" id="SSF50249">
    <property type="entry name" value="Nucleic acid-binding proteins"/>
    <property type="match status" value="1"/>
</dbReference>
<dbReference type="PROSITE" id="PS00056">
    <property type="entry name" value="RIBOSOMAL_S17"/>
    <property type="match status" value="1"/>
</dbReference>
<accession>Q48VU0</accession>
<evidence type="ECO:0000255" key="1">
    <source>
        <dbReference type="HAMAP-Rule" id="MF_01345"/>
    </source>
</evidence>
<evidence type="ECO:0000305" key="2"/>
<feature type="chain" id="PRO_0000233578" description="Small ribosomal subunit protein uS17">
    <location>
        <begin position="1"/>
        <end position="86"/>
    </location>
</feature>
<keyword id="KW-0687">Ribonucleoprotein</keyword>
<keyword id="KW-0689">Ribosomal protein</keyword>
<keyword id="KW-0694">RNA-binding</keyword>
<keyword id="KW-0699">rRNA-binding</keyword>